<proteinExistence type="inferred from homology"/>
<feature type="chain" id="PRO_1000215952" description="Tyrosine recombinase EUBREC_2677">
    <location>
        <begin position="1"/>
        <end position="306"/>
    </location>
</feature>
<feature type="domain" description="Core-binding (CB)" evidence="3">
    <location>
        <begin position="2"/>
        <end position="84"/>
    </location>
</feature>
<feature type="domain" description="Tyr recombinase" evidence="2">
    <location>
        <begin position="106"/>
        <end position="296"/>
    </location>
</feature>
<feature type="active site" evidence="2">
    <location>
        <position position="155"/>
    </location>
</feature>
<feature type="active site" evidence="2">
    <location>
        <position position="179"/>
    </location>
</feature>
<feature type="active site" evidence="2">
    <location>
        <position position="248"/>
    </location>
</feature>
<feature type="active site" evidence="2">
    <location>
        <position position="251"/>
    </location>
</feature>
<feature type="active site" evidence="2">
    <location>
        <position position="274"/>
    </location>
</feature>
<feature type="active site" description="O-(3'-phospho-DNA)-tyrosine intermediate" evidence="2">
    <location>
        <position position="283"/>
    </location>
</feature>
<dbReference type="EMBL" id="CP001107">
    <property type="protein sequence ID" value="ACR76408.1"/>
    <property type="molecule type" value="Genomic_DNA"/>
</dbReference>
<dbReference type="RefSeq" id="WP_012743493.1">
    <property type="nucleotide sequence ID" value="NC_012781.1"/>
</dbReference>
<dbReference type="SMR" id="C4ZGY6"/>
<dbReference type="STRING" id="515619.EUBREC_2677"/>
<dbReference type="PaxDb" id="515619-EUBREC_2677"/>
<dbReference type="GeneID" id="86989403"/>
<dbReference type="KEGG" id="ere:EUBREC_2677"/>
<dbReference type="HOGENOM" id="CLU_027562_9_0_9"/>
<dbReference type="Proteomes" id="UP000001477">
    <property type="component" value="Chromosome"/>
</dbReference>
<dbReference type="GO" id="GO:0005737">
    <property type="term" value="C:cytoplasm"/>
    <property type="evidence" value="ECO:0007669"/>
    <property type="project" value="UniProtKB-SubCell"/>
</dbReference>
<dbReference type="GO" id="GO:0003677">
    <property type="term" value="F:DNA binding"/>
    <property type="evidence" value="ECO:0007669"/>
    <property type="project" value="UniProtKB-KW"/>
</dbReference>
<dbReference type="GO" id="GO:0051301">
    <property type="term" value="P:cell division"/>
    <property type="evidence" value="ECO:0007669"/>
    <property type="project" value="UniProtKB-KW"/>
</dbReference>
<dbReference type="GO" id="GO:0007059">
    <property type="term" value="P:chromosome segregation"/>
    <property type="evidence" value="ECO:0007669"/>
    <property type="project" value="UniProtKB-KW"/>
</dbReference>
<dbReference type="GO" id="GO:0015074">
    <property type="term" value="P:DNA integration"/>
    <property type="evidence" value="ECO:0007669"/>
    <property type="project" value="UniProtKB-KW"/>
</dbReference>
<dbReference type="GO" id="GO:0006310">
    <property type="term" value="P:DNA recombination"/>
    <property type="evidence" value="ECO:0007669"/>
    <property type="project" value="UniProtKB-KW"/>
</dbReference>
<dbReference type="CDD" id="cd00798">
    <property type="entry name" value="INT_XerDC_C"/>
    <property type="match status" value="1"/>
</dbReference>
<dbReference type="Gene3D" id="1.10.150.130">
    <property type="match status" value="1"/>
</dbReference>
<dbReference type="Gene3D" id="1.10.443.10">
    <property type="entry name" value="Intergrase catalytic core"/>
    <property type="match status" value="1"/>
</dbReference>
<dbReference type="InterPro" id="IPR044068">
    <property type="entry name" value="CB"/>
</dbReference>
<dbReference type="InterPro" id="IPR011010">
    <property type="entry name" value="DNA_brk_join_enz"/>
</dbReference>
<dbReference type="InterPro" id="IPR013762">
    <property type="entry name" value="Integrase-like_cat_sf"/>
</dbReference>
<dbReference type="InterPro" id="IPR002104">
    <property type="entry name" value="Integrase_catalytic"/>
</dbReference>
<dbReference type="InterPro" id="IPR010998">
    <property type="entry name" value="Integrase_recombinase_N"/>
</dbReference>
<dbReference type="InterPro" id="IPR004107">
    <property type="entry name" value="Integrase_SAM-like_N"/>
</dbReference>
<dbReference type="InterPro" id="IPR050090">
    <property type="entry name" value="Tyrosine_recombinase_XerCD"/>
</dbReference>
<dbReference type="PANTHER" id="PTHR30349">
    <property type="entry name" value="PHAGE INTEGRASE-RELATED"/>
    <property type="match status" value="1"/>
</dbReference>
<dbReference type="PANTHER" id="PTHR30349:SF81">
    <property type="entry name" value="TYROSINE RECOMBINASE XERC"/>
    <property type="match status" value="1"/>
</dbReference>
<dbReference type="Pfam" id="PF02899">
    <property type="entry name" value="Phage_int_SAM_1"/>
    <property type="match status" value="1"/>
</dbReference>
<dbReference type="Pfam" id="PF00589">
    <property type="entry name" value="Phage_integrase"/>
    <property type="match status" value="1"/>
</dbReference>
<dbReference type="SUPFAM" id="SSF56349">
    <property type="entry name" value="DNA breaking-rejoining enzymes"/>
    <property type="match status" value="1"/>
</dbReference>
<dbReference type="PROSITE" id="PS51900">
    <property type="entry name" value="CB"/>
    <property type="match status" value="1"/>
</dbReference>
<dbReference type="PROSITE" id="PS51898">
    <property type="entry name" value="TYR_RECOMBINASE"/>
    <property type="match status" value="1"/>
</dbReference>
<name>XER_AGARV</name>
<comment type="function">
    <text evidence="1">Site-specific tyrosine recombinase, which acts by catalyzing the cutting and rejoining of the recombining DNA molecules.</text>
</comment>
<comment type="subcellular location">
    <subcellularLocation>
        <location evidence="4">Cytoplasm</location>
    </subcellularLocation>
</comment>
<comment type="similarity">
    <text evidence="4">Belongs to the 'phage' integrase family.</text>
</comment>
<organism>
    <name type="scientific">Agathobacter rectalis (strain ATCC 33656 / DSM 3377 / JCM 17463 / KCTC 5835 / VPI 0990)</name>
    <name type="common">Eubacterium rectale</name>
    <dbReference type="NCBI Taxonomy" id="515619"/>
    <lineage>
        <taxon>Bacteria</taxon>
        <taxon>Bacillati</taxon>
        <taxon>Bacillota</taxon>
        <taxon>Clostridia</taxon>
        <taxon>Lachnospirales</taxon>
        <taxon>Lachnospiraceae</taxon>
        <taxon>Agathobacter</taxon>
    </lineage>
</organism>
<evidence type="ECO:0000250" key="1">
    <source>
        <dbReference type="UniProtKB" id="P0A8P8"/>
    </source>
</evidence>
<evidence type="ECO:0000255" key="2">
    <source>
        <dbReference type="PROSITE-ProRule" id="PRU01246"/>
    </source>
</evidence>
<evidence type="ECO:0000255" key="3">
    <source>
        <dbReference type="PROSITE-ProRule" id="PRU01248"/>
    </source>
</evidence>
<evidence type="ECO:0000305" key="4"/>
<keyword id="KW-0131">Cell cycle</keyword>
<keyword id="KW-0132">Cell division</keyword>
<keyword id="KW-0159">Chromosome partition</keyword>
<keyword id="KW-0963">Cytoplasm</keyword>
<keyword id="KW-0229">DNA integration</keyword>
<keyword id="KW-0233">DNA recombination</keyword>
<keyword id="KW-0238">DNA-binding</keyword>
<gene>
    <name type="ordered locus">EUBREC_2677</name>
</gene>
<sequence length="306" mass="35862">MNNLQTHISSYLEYCLAQKRLDEKTIKAYRIDLIQFYNEISISDPCKIASYDLEKYIEKMHLKYKPKSVRRKIASIKAFFHYLEYKNIILQNPFNKIQIHFREPVILPKTIPLYIVEKFLFTIYKQRSAAKTNYQKRNALRDAAIVELLFSTGIRISELCNLKISDVNLIDGVILIYGKGSKERILQIGNSSVLNILKEYKNDFYNEIVQCNHFFSSQSGKPLSDQSVRRMINKYASLSSIDLHITPHMFRHTFATSLLEADVDIRYIQEMLGHSSINITQIYTHVAVSKQKDILINKHPRKDFHF</sequence>
<protein>
    <recommendedName>
        <fullName evidence="4">Tyrosine recombinase EUBREC_2677</fullName>
    </recommendedName>
</protein>
<accession>C4ZGY6</accession>
<reference key="1">
    <citation type="journal article" date="2009" name="Proc. Natl. Acad. Sci. U.S.A.">
        <title>Characterizing a model human gut microbiota composed of members of its two dominant bacterial phyla.</title>
        <authorList>
            <person name="Mahowald M.A."/>
            <person name="Rey F.E."/>
            <person name="Seedorf H."/>
            <person name="Turnbaugh P.J."/>
            <person name="Fulton R.S."/>
            <person name="Wollam A."/>
            <person name="Shah N."/>
            <person name="Wang C."/>
            <person name="Magrini V."/>
            <person name="Wilson R.K."/>
            <person name="Cantarel B.L."/>
            <person name="Coutinho P.M."/>
            <person name="Henrissat B."/>
            <person name="Crock L.W."/>
            <person name="Russell A."/>
            <person name="Verberkmoes N.C."/>
            <person name="Hettich R.L."/>
            <person name="Gordon J.I."/>
        </authorList>
    </citation>
    <scope>NUCLEOTIDE SEQUENCE [LARGE SCALE GENOMIC DNA]</scope>
    <source>
        <strain>ATCC 33656 / DSM 3377 / JCM 17463 / KCTC 5835 / LMG 30912 / VPI 0990</strain>
    </source>
</reference>